<protein>
    <recommendedName>
        <fullName>Fas-activated serine/threonine kinase</fullName>
        <shortName>FAST kinase</shortName>
        <ecNumber evidence="6">2.7.11.1</ecNumber>
        <ecNumber evidence="6">2.7.11.8</ecNumber>
    </recommendedName>
</protein>
<proteinExistence type="evidence at protein level"/>
<comment type="function">
    <text evidence="3 6">Phosphorylates the splicing regulator TIA1, thereby promoting the inclusion of FAS exon 6, which leads to an mRNA encoding a pro-apoptotic form of the receptor.</text>
</comment>
<comment type="function">
    <molecule>Isoform 4</molecule>
    <text evidence="5">Required for the biogenesis of some mitochondrial-encoded mRNAs, specifically stabilizes ND6 (NADH dehydrogenase complex subunit 6) mRNA, and regulates its levels.</text>
</comment>
<comment type="catalytic activity">
    <reaction evidence="6">
        <text>L-seryl-[Fas-activated protein] + ATP = O-phospho-L-seryl-[Fas-activated protein] + ADP + H(+)</text>
        <dbReference type="Rhea" id="RHEA:15881"/>
        <dbReference type="Rhea" id="RHEA-COMP:13713"/>
        <dbReference type="Rhea" id="RHEA-COMP:13714"/>
        <dbReference type="ChEBI" id="CHEBI:15378"/>
        <dbReference type="ChEBI" id="CHEBI:29999"/>
        <dbReference type="ChEBI" id="CHEBI:30616"/>
        <dbReference type="ChEBI" id="CHEBI:83421"/>
        <dbReference type="ChEBI" id="CHEBI:456216"/>
        <dbReference type="EC" id="2.7.11.8"/>
    </reaction>
</comment>
<comment type="catalytic activity">
    <reaction evidence="6">
        <text>L-threonyl-[Fas-activated protein] + ATP = O-phospho-L-threonyl-[Fas-activated protein] + ADP + H(+)</text>
        <dbReference type="Rhea" id="RHEA:53920"/>
        <dbReference type="Rhea" id="RHEA-COMP:13715"/>
        <dbReference type="Rhea" id="RHEA-COMP:13716"/>
        <dbReference type="ChEBI" id="CHEBI:15378"/>
        <dbReference type="ChEBI" id="CHEBI:30013"/>
        <dbReference type="ChEBI" id="CHEBI:30616"/>
        <dbReference type="ChEBI" id="CHEBI:61977"/>
        <dbReference type="ChEBI" id="CHEBI:456216"/>
        <dbReference type="EC" id="2.7.11.8"/>
    </reaction>
</comment>
<comment type="catalytic activity">
    <reaction evidence="6">
        <text>L-seryl-[protein] + ATP = O-phospho-L-seryl-[protein] + ADP + H(+)</text>
        <dbReference type="Rhea" id="RHEA:17989"/>
        <dbReference type="Rhea" id="RHEA-COMP:9863"/>
        <dbReference type="Rhea" id="RHEA-COMP:11604"/>
        <dbReference type="ChEBI" id="CHEBI:15378"/>
        <dbReference type="ChEBI" id="CHEBI:29999"/>
        <dbReference type="ChEBI" id="CHEBI:30616"/>
        <dbReference type="ChEBI" id="CHEBI:83421"/>
        <dbReference type="ChEBI" id="CHEBI:456216"/>
        <dbReference type="EC" id="2.7.11.1"/>
    </reaction>
</comment>
<comment type="catalytic activity">
    <reaction evidence="6">
        <text>L-threonyl-[protein] + ATP = O-phospho-L-threonyl-[protein] + ADP + H(+)</text>
        <dbReference type="Rhea" id="RHEA:46608"/>
        <dbReference type="Rhea" id="RHEA-COMP:11060"/>
        <dbReference type="Rhea" id="RHEA-COMP:11605"/>
        <dbReference type="ChEBI" id="CHEBI:15378"/>
        <dbReference type="ChEBI" id="CHEBI:30013"/>
        <dbReference type="ChEBI" id="CHEBI:30616"/>
        <dbReference type="ChEBI" id="CHEBI:61977"/>
        <dbReference type="ChEBI" id="CHEBI:456216"/>
        <dbReference type="EC" id="2.7.11.1"/>
    </reaction>
</comment>
<comment type="subunit">
    <text evidence="3 6">Interacts with TIA1; the interactions leads to TIA1 phosphorylation (PubMed:17135269, PubMed:7544399). Interacts with TIAR (PubMed:17135269, PubMed:7544399).</text>
</comment>
<comment type="interaction">
    <interactant intactId="EBI-1754067">
        <id>Q14296</id>
    </interactant>
    <interactant intactId="EBI-11954292">
        <id>Q86V38</id>
        <label>ATN1</label>
    </interactant>
    <organismsDiffer>false</organismsDiffer>
    <experiments>3</experiments>
</comment>
<comment type="interaction">
    <interactant intactId="EBI-1754067">
        <id>Q14296</id>
    </interactant>
    <interactant intactId="EBI-2555370">
        <id>Q8IWX8</id>
        <label>CHERP</label>
    </interactant>
    <organismsDiffer>false</organismsDiffer>
    <experiments>3</experiments>
</comment>
<comment type="interaction">
    <interactant intactId="EBI-1754067">
        <id>Q14296</id>
    </interactant>
    <interactant intactId="EBI-12001340">
        <id>P62508-3</id>
        <label>ESRRG</label>
    </interactant>
    <organismsDiffer>false</organismsDiffer>
    <experiments>3</experiments>
</comment>
<comment type="interaction">
    <interactant intactId="EBI-1754067">
        <id>Q14296</id>
    </interactant>
    <interactant intactId="EBI-2432309">
        <id>Q92876</id>
        <label>KLK6</label>
    </interactant>
    <organismsDiffer>false</organismsDiffer>
    <experiments>3</experiments>
</comment>
<comment type="interaction">
    <interactant intactId="EBI-1754067">
        <id>Q14296</id>
    </interactant>
    <interactant intactId="EBI-1567797">
        <id>Q8WWY3</id>
        <label>PRPF31</label>
    </interactant>
    <organismsDiffer>false</organismsDiffer>
    <experiments>3</experiments>
</comment>
<comment type="interaction">
    <interactant intactId="EBI-1754067">
        <id>Q14296</id>
    </interactant>
    <interactant intactId="EBI-373403">
        <id>O95985</id>
        <label>TOP3B</label>
    </interactant>
    <organismsDiffer>false</organismsDiffer>
    <experiments>3</experiments>
</comment>
<comment type="interaction">
    <interactant intactId="EBI-1754067">
        <id>Q14296</id>
    </interactant>
    <interactant intactId="EBI-346356">
        <id>O43516</id>
        <label>WIPF1</label>
    </interactant>
    <organismsDiffer>false</organismsDiffer>
    <experiments>3</experiments>
</comment>
<comment type="subcellular location">
    <molecule>Isoform 4</molecule>
    <subcellularLocation>
        <location evidence="5">Mitochondrion matrix</location>
    </subcellularLocation>
    <text evidence="5">Colocalizes with mitochondrial RNA granules.</text>
</comment>
<comment type="alternative products">
    <event type="alternative splicing"/>
    <event type="alternative initiation"/>
    <isoform>
        <id>Q14296-1</id>
        <name>1</name>
        <sequence type="displayed"/>
    </isoform>
    <isoform>
        <id>Q14296-2</id>
        <name>2</name>
        <sequence type="described" ref="VSP_042746 VSP_042747"/>
    </isoform>
    <isoform>
        <id>Q14296-3</id>
        <name>3</name>
        <sequence type="described" ref="VSP_044811"/>
    </isoform>
    <isoform>
        <id>Q14296-4</id>
        <name>4</name>
        <sequence type="described" ref="VSP_058246"/>
    </isoform>
</comment>
<comment type="tissue specificity">
    <text>Expressed in heart, brain, placenta, lung, liver, skeletal muscle, kidney and pancreas.</text>
</comment>
<comment type="domain">
    <text evidence="5">The RAP domain is essential for RNA-binding.</text>
</comment>
<comment type="PTM">
    <text evidence="6">Autophosphorylated on serine/threonine residues. Activated by dephosphorylation.</text>
</comment>
<comment type="similarity">
    <text evidence="10">Belongs to the FAST protein kinase family.</text>
</comment>
<comment type="sequence caution" evidence="10">
    <conflict type="erroneous initiation">
        <sequence resource="EMBL-CDS" id="BAD93020"/>
    </conflict>
    <text>Extended N-terminus.</text>
</comment>
<name>FASTK_HUMAN</name>
<feature type="chain" id="PRO_0000087196" description="Fas-activated serine/threonine kinase">
    <location>
        <begin position="1"/>
        <end position="549"/>
    </location>
</feature>
<feature type="domain" description="RAP" evidence="1">
    <location>
        <begin position="477"/>
        <end position="535"/>
    </location>
</feature>
<feature type="region of interest" description="Disordered" evidence="2">
    <location>
        <begin position="1"/>
        <end position="30"/>
    </location>
</feature>
<feature type="splice variant" id="VSP_058246" description="In isoform 4." evidence="8">
    <location>
        <begin position="1"/>
        <end position="34"/>
    </location>
</feature>
<feature type="splice variant" id="VSP_042746" description="In isoform 2." evidence="7">
    <original>W</original>
    <variation>C</variation>
    <location>
        <position position="28"/>
    </location>
</feature>
<feature type="splice variant" id="VSP_042747" description="In isoform 2." evidence="7">
    <location>
        <begin position="29"/>
        <end position="169"/>
    </location>
</feature>
<feature type="splice variant" id="VSP_044811" description="In isoform 3." evidence="9">
    <location>
        <begin position="202"/>
        <end position="228"/>
    </location>
</feature>
<feature type="sequence variant" id="VAR_042200" description="In a lung adenocarcinoma sample; somatic mutation; dbSNP:rs758691941." evidence="4">
    <original>V</original>
    <variation>L</variation>
    <location>
        <position position="424"/>
    </location>
</feature>
<feature type="sequence variant" id="VAR_021970" description="In dbSNP:rs2288648.">
    <original>A</original>
    <variation>V</variation>
    <location>
        <position position="436"/>
    </location>
</feature>
<feature type="mutagenesis site" description="Abolishes isoform 4 expression." evidence="5">
    <original>M</original>
    <variation>G</variation>
    <location>
        <position position="35"/>
    </location>
</feature>
<reference key="1">
    <citation type="journal article" date="1995" name="J. Exp. Med.">
        <title>Fas-activated serine/threonine kinase (FAST) phosphorylates TIA-1 during Fas-mediated apoptosis.</title>
        <authorList>
            <person name="Tian Q."/>
            <person name="Taupin J.-L."/>
            <person name="Elledge S."/>
            <person name="Robertson M."/>
            <person name="Anderson P."/>
        </authorList>
    </citation>
    <scope>NUCLEOTIDE SEQUENCE [MRNA] (ISOFORM 1)</scope>
    <scope>FUNCTION</scope>
    <scope>CATALYTIC ACTIVITY</scope>
    <scope>INTERACTION WITH TIA1 AND TIAR</scope>
    <scope>PHOSPHORYLATION</scope>
    <scope>DEPHOSPHORYLATION</scope>
    <source>
        <tissue>Peripheral blood lymphocyte</tissue>
    </source>
</reference>
<reference key="2">
    <citation type="journal article" date="2004" name="Nat. Genet.">
        <title>Complete sequencing and characterization of 21,243 full-length human cDNAs.</title>
        <authorList>
            <person name="Ota T."/>
            <person name="Suzuki Y."/>
            <person name="Nishikawa T."/>
            <person name="Otsuki T."/>
            <person name="Sugiyama T."/>
            <person name="Irie R."/>
            <person name="Wakamatsu A."/>
            <person name="Hayashi K."/>
            <person name="Sato H."/>
            <person name="Nagai K."/>
            <person name="Kimura K."/>
            <person name="Makita H."/>
            <person name="Sekine M."/>
            <person name="Obayashi M."/>
            <person name="Nishi T."/>
            <person name="Shibahara T."/>
            <person name="Tanaka T."/>
            <person name="Ishii S."/>
            <person name="Yamamoto J."/>
            <person name="Saito K."/>
            <person name="Kawai Y."/>
            <person name="Isono Y."/>
            <person name="Nakamura Y."/>
            <person name="Nagahari K."/>
            <person name="Murakami K."/>
            <person name="Yasuda T."/>
            <person name="Iwayanagi T."/>
            <person name="Wagatsuma M."/>
            <person name="Shiratori A."/>
            <person name="Sudo H."/>
            <person name="Hosoiri T."/>
            <person name="Kaku Y."/>
            <person name="Kodaira H."/>
            <person name="Kondo H."/>
            <person name="Sugawara M."/>
            <person name="Takahashi M."/>
            <person name="Kanda K."/>
            <person name="Yokoi T."/>
            <person name="Furuya T."/>
            <person name="Kikkawa E."/>
            <person name="Omura Y."/>
            <person name="Abe K."/>
            <person name="Kamihara K."/>
            <person name="Katsuta N."/>
            <person name="Sato K."/>
            <person name="Tanikawa M."/>
            <person name="Yamazaki M."/>
            <person name="Ninomiya K."/>
            <person name="Ishibashi T."/>
            <person name="Yamashita H."/>
            <person name="Murakawa K."/>
            <person name="Fujimori K."/>
            <person name="Tanai H."/>
            <person name="Kimata M."/>
            <person name="Watanabe M."/>
            <person name="Hiraoka S."/>
            <person name="Chiba Y."/>
            <person name="Ishida S."/>
            <person name="Ono Y."/>
            <person name="Takiguchi S."/>
            <person name="Watanabe S."/>
            <person name="Yosida M."/>
            <person name="Hotuta T."/>
            <person name="Kusano J."/>
            <person name="Kanehori K."/>
            <person name="Takahashi-Fujii A."/>
            <person name="Hara H."/>
            <person name="Tanase T.-O."/>
            <person name="Nomura Y."/>
            <person name="Togiya S."/>
            <person name="Komai F."/>
            <person name="Hara R."/>
            <person name="Takeuchi K."/>
            <person name="Arita M."/>
            <person name="Imose N."/>
            <person name="Musashino K."/>
            <person name="Yuuki H."/>
            <person name="Oshima A."/>
            <person name="Sasaki N."/>
            <person name="Aotsuka S."/>
            <person name="Yoshikawa Y."/>
            <person name="Matsunawa H."/>
            <person name="Ichihara T."/>
            <person name="Shiohata N."/>
            <person name="Sano S."/>
            <person name="Moriya S."/>
            <person name="Momiyama H."/>
            <person name="Satoh N."/>
            <person name="Takami S."/>
            <person name="Terashima Y."/>
            <person name="Suzuki O."/>
            <person name="Nakagawa S."/>
            <person name="Senoh A."/>
            <person name="Mizoguchi H."/>
            <person name="Goto Y."/>
            <person name="Shimizu F."/>
            <person name="Wakebe H."/>
            <person name="Hishigaki H."/>
            <person name="Watanabe T."/>
            <person name="Sugiyama A."/>
            <person name="Takemoto M."/>
            <person name="Kawakami B."/>
            <person name="Yamazaki M."/>
            <person name="Watanabe K."/>
            <person name="Kumagai A."/>
            <person name="Itakura S."/>
            <person name="Fukuzumi Y."/>
            <person name="Fujimori Y."/>
            <person name="Komiyama M."/>
            <person name="Tashiro H."/>
            <person name="Tanigami A."/>
            <person name="Fujiwara T."/>
            <person name="Ono T."/>
            <person name="Yamada K."/>
            <person name="Fujii Y."/>
            <person name="Ozaki K."/>
            <person name="Hirao M."/>
            <person name="Ohmori Y."/>
            <person name="Kawabata A."/>
            <person name="Hikiji T."/>
            <person name="Kobatake N."/>
            <person name="Inagaki H."/>
            <person name="Ikema Y."/>
            <person name="Okamoto S."/>
            <person name="Okitani R."/>
            <person name="Kawakami T."/>
            <person name="Noguchi S."/>
            <person name="Itoh T."/>
            <person name="Shigeta K."/>
            <person name="Senba T."/>
            <person name="Matsumura K."/>
            <person name="Nakajima Y."/>
            <person name="Mizuno T."/>
            <person name="Morinaga M."/>
            <person name="Sasaki M."/>
            <person name="Togashi T."/>
            <person name="Oyama M."/>
            <person name="Hata H."/>
            <person name="Watanabe M."/>
            <person name="Komatsu T."/>
            <person name="Mizushima-Sugano J."/>
            <person name="Satoh T."/>
            <person name="Shirai Y."/>
            <person name="Takahashi Y."/>
            <person name="Nakagawa K."/>
            <person name="Okumura K."/>
            <person name="Nagase T."/>
            <person name="Nomura N."/>
            <person name="Kikuchi H."/>
            <person name="Masuho Y."/>
            <person name="Yamashita R."/>
            <person name="Nakai K."/>
            <person name="Yada T."/>
            <person name="Nakamura Y."/>
            <person name="Ohara O."/>
            <person name="Isogai T."/>
            <person name="Sugano S."/>
        </authorList>
    </citation>
    <scope>NUCLEOTIDE SEQUENCE [LARGE SCALE MRNA] (ISOFORM 1)</scope>
    <source>
        <tissue>Testis</tissue>
    </source>
</reference>
<reference key="3">
    <citation type="submission" date="2005-03" db="EMBL/GenBank/DDBJ databases">
        <title>Homo sapiens protein coding cDNA.</title>
        <authorList>
            <person name="Totoki Y."/>
            <person name="Toyoda A."/>
            <person name="Takeda T."/>
            <person name="Sakaki Y."/>
            <person name="Tanaka A."/>
            <person name="Yokoyama S."/>
            <person name="Ohara O."/>
            <person name="Nagase T."/>
            <person name="Kikuno R.F."/>
        </authorList>
    </citation>
    <scope>NUCLEOTIDE SEQUENCE [LARGE SCALE MRNA] (ISOFORM 3)</scope>
    <source>
        <tissue>Brain</tissue>
    </source>
</reference>
<reference key="4">
    <citation type="journal article" date="2003" name="Nature">
        <title>The DNA sequence of human chromosome 7.</title>
        <authorList>
            <person name="Hillier L.W."/>
            <person name="Fulton R.S."/>
            <person name="Fulton L.A."/>
            <person name="Graves T.A."/>
            <person name="Pepin K.H."/>
            <person name="Wagner-McPherson C."/>
            <person name="Layman D."/>
            <person name="Maas J."/>
            <person name="Jaeger S."/>
            <person name="Walker R."/>
            <person name="Wylie K."/>
            <person name="Sekhon M."/>
            <person name="Becker M.C."/>
            <person name="O'Laughlin M.D."/>
            <person name="Schaller M.E."/>
            <person name="Fewell G.A."/>
            <person name="Delehaunty K.D."/>
            <person name="Miner T.L."/>
            <person name="Nash W.E."/>
            <person name="Cordes M."/>
            <person name="Du H."/>
            <person name="Sun H."/>
            <person name="Edwards J."/>
            <person name="Bradshaw-Cordum H."/>
            <person name="Ali J."/>
            <person name="Andrews S."/>
            <person name="Isak A."/>
            <person name="Vanbrunt A."/>
            <person name="Nguyen C."/>
            <person name="Du F."/>
            <person name="Lamar B."/>
            <person name="Courtney L."/>
            <person name="Kalicki J."/>
            <person name="Ozersky P."/>
            <person name="Bielicki L."/>
            <person name="Scott K."/>
            <person name="Holmes A."/>
            <person name="Harkins R."/>
            <person name="Harris A."/>
            <person name="Strong C.M."/>
            <person name="Hou S."/>
            <person name="Tomlinson C."/>
            <person name="Dauphin-Kohlberg S."/>
            <person name="Kozlowicz-Reilly A."/>
            <person name="Leonard S."/>
            <person name="Rohlfing T."/>
            <person name="Rock S.M."/>
            <person name="Tin-Wollam A.-M."/>
            <person name="Abbott A."/>
            <person name="Minx P."/>
            <person name="Maupin R."/>
            <person name="Strowmatt C."/>
            <person name="Latreille P."/>
            <person name="Miller N."/>
            <person name="Johnson D."/>
            <person name="Murray J."/>
            <person name="Woessner J.P."/>
            <person name="Wendl M.C."/>
            <person name="Yang S.-P."/>
            <person name="Schultz B.R."/>
            <person name="Wallis J.W."/>
            <person name="Spieth J."/>
            <person name="Bieri T.A."/>
            <person name="Nelson J.O."/>
            <person name="Berkowicz N."/>
            <person name="Wohldmann P.E."/>
            <person name="Cook L.L."/>
            <person name="Hickenbotham M.T."/>
            <person name="Eldred J."/>
            <person name="Williams D."/>
            <person name="Bedell J.A."/>
            <person name="Mardis E.R."/>
            <person name="Clifton S.W."/>
            <person name="Chissoe S.L."/>
            <person name="Marra M.A."/>
            <person name="Raymond C."/>
            <person name="Haugen E."/>
            <person name="Gillett W."/>
            <person name="Zhou Y."/>
            <person name="James R."/>
            <person name="Phelps K."/>
            <person name="Iadanoto S."/>
            <person name="Bubb K."/>
            <person name="Simms E."/>
            <person name="Levy R."/>
            <person name="Clendenning J."/>
            <person name="Kaul R."/>
            <person name="Kent W.J."/>
            <person name="Furey T.S."/>
            <person name="Baertsch R.A."/>
            <person name="Brent M.R."/>
            <person name="Keibler E."/>
            <person name="Flicek P."/>
            <person name="Bork P."/>
            <person name="Suyama M."/>
            <person name="Bailey J.A."/>
            <person name="Portnoy M.E."/>
            <person name="Torrents D."/>
            <person name="Chinwalla A.T."/>
            <person name="Gish W.R."/>
            <person name="Eddy S.R."/>
            <person name="McPherson J.D."/>
            <person name="Olson M.V."/>
            <person name="Eichler E.E."/>
            <person name="Green E.D."/>
            <person name="Waterston R.H."/>
            <person name="Wilson R.K."/>
        </authorList>
    </citation>
    <scope>NUCLEOTIDE SEQUENCE [LARGE SCALE GENOMIC DNA]</scope>
</reference>
<reference key="5">
    <citation type="submission" date="2005-09" db="EMBL/GenBank/DDBJ databases">
        <authorList>
            <person name="Mural R.J."/>
            <person name="Istrail S."/>
            <person name="Sutton G.G."/>
            <person name="Florea L."/>
            <person name="Halpern A.L."/>
            <person name="Mobarry C.M."/>
            <person name="Lippert R."/>
            <person name="Walenz B."/>
            <person name="Shatkay H."/>
            <person name="Dew I."/>
            <person name="Miller J.R."/>
            <person name="Flanigan M.J."/>
            <person name="Edwards N.J."/>
            <person name="Bolanos R."/>
            <person name="Fasulo D."/>
            <person name="Halldorsson B.V."/>
            <person name="Hannenhalli S."/>
            <person name="Turner R."/>
            <person name="Yooseph S."/>
            <person name="Lu F."/>
            <person name="Nusskern D.R."/>
            <person name="Shue B.C."/>
            <person name="Zheng X.H."/>
            <person name="Zhong F."/>
            <person name="Delcher A.L."/>
            <person name="Huson D.H."/>
            <person name="Kravitz S.A."/>
            <person name="Mouchard L."/>
            <person name="Reinert K."/>
            <person name="Remington K.A."/>
            <person name="Clark A.G."/>
            <person name="Waterman M.S."/>
            <person name="Eichler E.E."/>
            <person name="Adams M.D."/>
            <person name="Hunkapiller M.W."/>
            <person name="Myers E.W."/>
            <person name="Venter J.C."/>
        </authorList>
    </citation>
    <scope>NUCLEOTIDE SEQUENCE [LARGE SCALE GENOMIC DNA]</scope>
</reference>
<reference key="6">
    <citation type="journal article" date="2004" name="Genome Res.">
        <title>The status, quality, and expansion of the NIH full-length cDNA project: the Mammalian Gene Collection (MGC).</title>
        <authorList>
            <consortium name="The MGC Project Team"/>
        </authorList>
    </citation>
    <scope>NUCLEOTIDE SEQUENCE [LARGE SCALE MRNA] (ISOFORMS 1 AND 2)</scope>
    <source>
        <tissue>Brain</tissue>
        <tissue>Skin</tissue>
    </source>
</reference>
<reference key="7">
    <citation type="journal article" date="2007" name="J. Biol. Chem.">
        <title>Fas-activated serine/threonine kinase (FAST K) synergizes with TIA-1/TIAR proteins to regulate Fas alternative splicing.</title>
        <authorList>
            <person name="Izquierdo J.M."/>
            <person name="Valcarcel J."/>
        </authorList>
    </citation>
    <scope>FUNCTION</scope>
    <scope>INTERACTION WITH TIA1 AND TIAR</scope>
</reference>
<reference key="8">
    <citation type="journal article" date="2015" name="Cell Rep.">
        <title>A mitochondria-specific isoform of FASTK is present in mitochondrial RNA granules and regulates gene expression and function.</title>
        <authorList>
            <person name="Jourdain A.A."/>
            <person name="Koppen M."/>
            <person name="Rodley C.D."/>
            <person name="Maundrell K."/>
            <person name="Gueguen N."/>
            <person name="Reynier P."/>
            <person name="Guaras A.M."/>
            <person name="Enriquez J.A."/>
            <person name="Anderson P."/>
            <person name="Simarro M."/>
            <person name="Martinou J.C."/>
        </authorList>
    </citation>
    <scope>FUNCTION (ISOFORM 4)</scope>
    <scope>SUBCELLULAR LOCATION (ISOFORM 4)</scope>
    <scope>DOMAIN</scope>
    <scope>RNA-BINDING</scope>
    <scope>MUTAGENESIS OF MET-35</scope>
    <scope>ALTERNATIVE INITIATION</scope>
</reference>
<reference key="9">
    <citation type="journal article" date="2007" name="Nature">
        <title>Patterns of somatic mutation in human cancer genomes.</title>
        <authorList>
            <person name="Greenman C."/>
            <person name="Stephens P."/>
            <person name="Smith R."/>
            <person name="Dalgliesh G.L."/>
            <person name="Hunter C."/>
            <person name="Bignell G."/>
            <person name="Davies H."/>
            <person name="Teague J."/>
            <person name="Butler A."/>
            <person name="Stevens C."/>
            <person name="Edkins S."/>
            <person name="O'Meara S."/>
            <person name="Vastrik I."/>
            <person name="Schmidt E.E."/>
            <person name="Avis T."/>
            <person name="Barthorpe S."/>
            <person name="Bhamra G."/>
            <person name="Buck G."/>
            <person name="Choudhury B."/>
            <person name="Clements J."/>
            <person name="Cole J."/>
            <person name="Dicks E."/>
            <person name="Forbes S."/>
            <person name="Gray K."/>
            <person name="Halliday K."/>
            <person name="Harrison R."/>
            <person name="Hills K."/>
            <person name="Hinton J."/>
            <person name="Jenkinson A."/>
            <person name="Jones D."/>
            <person name="Menzies A."/>
            <person name="Mironenko T."/>
            <person name="Perry J."/>
            <person name="Raine K."/>
            <person name="Richardson D."/>
            <person name="Shepherd R."/>
            <person name="Small A."/>
            <person name="Tofts C."/>
            <person name="Varian J."/>
            <person name="Webb T."/>
            <person name="West S."/>
            <person name="Widaa S."/>
            <person name="Yates A."/>
            <person name="Cahill D.P."/>
            <person name="Louis D.N."/>
            <person name="Goldstraw P."/>
            <person name="Nicholson A.G."/>
            <person name="Brasseur F."/>
            <person name="Looijenga L."/>
            <person name="Weber B.L."/>
            <person name="Chiew Y.-E."/>
            <person name="DeFazio A."/>
            <person name="Greaves M.F."/>
            <person name="Green A.R."/>
            <person name="Campbell P."/>
            <person name="Birney E."/>
            <person name="Easton D.F."/>
            <person name="Chenevix-Trench G."/>
            <person name="Tan M.-H."/>
            <person name="Khoo S.K."/>
            <person name="Teh B.T."/>
            <person name="Yuen S.T."/>
            <person name="Leung S.Y."/>
            <person name="Wooster R."/>
            <person name="Futreal P.A."/>
            <person name="Stratton M.R."/>
        </authorList>
    </citation>
    <scope>VARIANT [LARGE SCALE ANALYSIS] LEU-424</scope>
</reference>
<dbReference type="EC" id="2.7.11.1" evidence="6"/>
<dbReference type="EC" id="2.7.11.8" evidence="6"/>
<dbReference type="EMBL" id="X86779">
    <property type="protein sequence ID" value="CAA60448.1"/>
    <property type="molecule type" value="mRNA"/>
</dbReference>
<dbReference type="EMBL" id="AK292232">
    <property type="protein sequence ID" value="BAF84921.1"/>
    <property type="molecule type" value="mRNA"/>
</dbReference>
<dbReference type="EMBL" id="AB209783">
    <property type="protein sequence ID" value="BAD93020.1"/>
    <property type="status" value="ALT_INIT"/>
    <property type="molecule type" value="mRNA"/>
</dbReference>
<dbReference type="EMBL" id="AC010973">
    <property type="status" value="NOT_ANNOTATED_CDS"/>
    <property type="molecule type" value="Genomic_DNA"/>
</dbReference>
<dbReference type="EMBL" id="CH471173">
    <property type="protein sequence ID" value="EAW54039.1"/>
    <property type="molecule type" value="Genomic_DNA"/>
</dbReference>
<dbReference type="EMBL" id="CH471173">
    <property type="protein sequence ID" value="EAW54043.1"/>
    <property type="molecule type" value="Genomic_DNA"/>
</dbReference>
<dbReference type="EMBL" id="BC011770">
    <property type="protein sequence ID" value="AAH11770.1"/>
    <property type="molecule type" value="mRNA"/>
</dbReference>
<dbReference type="EMBL" id="BC039026">
    <property type="protein sequence ID" value="AAH39026.1"/>
    <property type="molecule type" value="mRNA"/>
</dbReference>
<dbReference type="CCDS" id="CCDS59088.1">
    <molecule id="Q14296-3"/>
</dbReference>
<dbReference type="CCDS" id="CCDS5918.1">
    <molecule id="Q14296-1"/>
</dbReference>
<dbReference type="CCDS" id="CCDS5919.1">
    <molecule id="Q14296-2"/>
</dbReference>
<dbReference type="PIR" id="I37386">
    <property type="entry name" value="I37386"/>
</dbReference>
<dbReference type="RefSeq" id="NP_001245390.1">
    <molecule id="Q14296-3"/>
    <property type="nucleotide sequence ID" value="NM_001258461.2"/>
</dbReference>
<dbReference type="RefSeq" id="NP_006703.1">
    <molecule id="Q14296-1"/>
    <property type="nucleotide sequence ID" value="NM_006712.5"/>
</dbReference>
<dbReference type="RefSeq" id="NP_148936.2">
    <molecule id="Q14296-2"/>
    <property type="nucleotide sequence ID" value="NM_033015.3"/>
</dbReference>
<dbReference type="RefSeq" id="XP_005249989.1">
    <molecule id="Q14296-4"/>
    <property type="nucleotide sequence ID" value="XM_005249932.2"/>
</dbReference>
<dbReference type="RefSeq" id="XP_005249990.1">
    <property type="nucleotide sequence ID" value="XM_005249933.3"/>
</dbReference>
<dbReference type="RefSeq" id="XP_054213124.1">
    <molecule id="Q14296-4"/>
    <property type="nucleotide sequence ID" value="XM_054357149.1"/>
</dbReference>
<dbReference type="SASBDB" id="Q14296"/>
<dbReference type="SMR" id="Q14296"/>
<dbReference type="BioGRID" id="116126">
    <property type="interactions" value="25"/>
</dbReference>
<dbReference type="FunCoup" id="Q14296">
    <property type="interactions" value="252"/>
</dbReference>
<dbReference type="IntAct" id="Q14296">
    <property type="interactions" value="24"/>
</dbReference>
<dbReference type="STRING" id="9606.ENSP00000297532"/>
<dbReference type="GlyGen" id="Q14296">
    <property type="glycosylation" value="2 sites, 1 O-linked glycan (1 site)"/>
</dbReference>
<dbReference type="iPTMnet" id="Q14296"/>
<dbReference type="PhosphoSitePlus" id="Q14296"/>
<dbReference type="BioMuta" id="FASTK"/>
<dbReference type="DMDM" id="13124202"/>
<dbReference type="jPOST" id="Q14296"/>
<dbReference type="MassIVE" id="Q14296"/>
<dbReference type="PaxDb" id="9606-ENSP00000297532"/>
<dbReference type="PeptideAtlas" id="Q14296"/>
<dbReference type="ProteomicsDB" id="28667"/>
<dbReference type="ProteomicsDB" id="59957">
    <molecule id="Q14296-1"/>
</dbReference>
<dbReference type="ProteomicsDB" id="59958">
    <molecule id="Q14296-2"/>
</dbReference>
<dbReference type="Antibodypedia" id="32964">
    <property type="antibodies" value="275 antibodies from 25 providers"/>
</dbReference>
<dbReference type="DNASU" id="10922"/>
<dbReference type="Ensembl" id="ENST00000297532.11">
    <molecule id="Q14296-1"/>
    <property type="protein sequence ID" value="ENSP00000297532.6"/>
    <property type="gene ID" value="ENSG00000164896.21"/>
</dbReference>
<dbReference type="Ensembl" id="ENST00000353841.6">
    <molecule id="Q14296-2"/>
    <property type="protein sequence ID" value="ENSP00000324817.6"/>
    <property type="gene ID" value="ENSG00000164896.21"/>
</dbReference>
<dbReference type="Ensembl" id="ENST00000482571.2">
    <molecule id="Q14296-3"/>
    <property type="protein sequence ID" value="ENSP00000418516.1"/>
    <property type="gene ID" value="ENSG00000164896.21"/>
</dbReference>
<dbReference type="GeneID" id="10922"/>
<dbReference type="KEGG" id="hsa:10922"/>
<dbReference type="MANE-Select" id="ENST00000297532.11">
    <property type="protein sequence ID" value="ENSP00000297532.6"/>
    <property type="RefSeq nucleotide sequence ID" value="NM_006712.5"/>
    <property type="RefSeq protein sequence ID" value="NP_006703.1"/>
</dbReference>
<dbReference type="UCSC" id="uc003wix.3">
    <molecule id="Q14296-1"/>
    <property type="organism name" value="human"/>
</dbReference>
<dbReference type="AGR" id="HGNC:24676"/>
<dbReference type="CTD" id="10922"/>
<dbReference type="DisGeNET" id="10922"/>
<dbReference type="GeneCards" id="FASTK"/>
<dbReference type="HGNC" id="HGNC:24676">
    <property type="gene designation" value="FASTK"/>
</dbReference>
<dbReference type="HPA" id="ENSG00000164896">
    <property type="expression patterns" value="Low tissue specificity"/>
</dbReference>
<dbReference type="MIM" id="606965">
    <property type="type" value="gene"/>
</dbReference>
<dbReference type="neXtProt" id="NX_Q14296"/>
<dbReference type="OpenTargets" id="ENSG00000164896"/>
<dbReference type="PharmGKB" id="PA142671775"/>
<dbReference type="VEuPathDB" id="HostDB:ENSG00000164896"/>
<dbReference type="eggNOG" id="ENOG502QXK7">
    <property type="taxonomic scope" value="Eukaryota"/>
</dbReference>
<dbReference type="GeneTree" id="ENSGT01030000234607"/>
<dbReference type="HOGENOM" id="CLU_046861_0_0_1"/>
<dbReference type="InParanoid" id="Q14296"/>
<dbReference type="OMA" id="KVRTHHY"/>
<dbReference type="OrthoDB" id="8881103at2759"/>
<dbReference type="PAN-GO" id="Q14296">
    <property type="GO annotations" value="5 GO annotations based on evolutionary models"/>
</dbReference>
<dbReference type="PhylomeDB" id="Q14296"/>
<dbReference type="TreeFam" id="TF331796"/>
<dbReference type="BRENDA" id="2.7.11.8">
    <property type="organism ID" value="2681"/>
</dbReference>
<dbReference type="PathwayCommons" id="Q14296"/>
<dbReference type="Reactome" id="R-HSA-9837092">
    <molecule id="Q14296-4"/>
    <property type="pathway name" value="FASTK family proteins regulate processing and stability of mitochondrial RNAs"/>
</dbReference>
<dbReference type="SignaLink" id="Q14296"/>
<dbReference type="BioGRID-ORCS" id="10922">
    <property type="hits" value="18 hits in 1190 CRISPR screens"/>
</dbReference>
<dbReference type="CD-CODE" id="5965E019">
    <property type="entry name" value="mtRNA granule"/>
</dbReference>
<dbReference type="CD-CODE" id="DEE660B4">
    <property type="entry name" value="Stress granule"/>
</dbReference>
<dbReference type="ChiTaRS" id="FASTK">
    <property type="organism name" value="human"/>
</dbReference>
<dbReference type="GeneWiki" id="FASTK"/>
<dbReference type="GenomeRNAi" id="10922"/>
<dbReference type="Pharos" id="Q14296">
    <property type="development level" value="Tbio"/>
</dbReference>
<dbReference type="PRO" id="PR:Q14296"/>
<dbReference type="Proteomes" id="UP000005640">
    <property type="component" value="Chromosome 7"/>
</dbReference>
<dbReference type="RNAct" id="Q14296">
    <property type="molecule type" value="protein"/>
</dbReference>
<dbReference type="Bgee" id="ENSG00000164896">
    <property type="expression patterns" value="Expressed in apex of heart and 190 other cell types or tissues"/>
</dbReference>
<dbReference type="ExpressionAtlas" id="Q14296">
    <property type="expression patterns" value="baseline and differential"/>
</dbReference>
<dbReference type="GO" id="GO:0005759">
    <property type="term" value="C:mitochondrial matrix"/>
    <property type="evidence" value="ECO:0000318"/>
    <property type="project" value="GO_Central"/>
</dbReference>
<dbReference type="GO" id="GO:0005739">
    <property type="term" value="C:mitochondrion"/>
    <property type="evidence" value="ECO:0006056"/>
    <property type="project" value="FlyBase"/>
</dbReference>
<dbReference type="GO" id="GO:0035770">
    <property type="term" value="C:ribonucleoprotein granule"/>
    <property type="evidence" value="ECO:0000318"/>
    <property type="project" value="GO_Central"/>
</dbReference>
<dbReference type="GO" id="GO:0005524">
    <property type="term" value="F:ATP binding"/>
    <property type="evidence" value="ECO:0007669"/>
    <property type="project" value="UniProtKB-KW"/>
</dbReference>
<dbReference type="GO" id="GO:0033867">
    <property type="term" value="F:Fas-activated serine/threonine kinase activity"/>
    <property type="evidence" value="ECO:0007669"/>
    <property type="project" value="UniProtKB-EC"/>
</dbReference>
<dbReference type="GO" id="GO:0106310">
    <property type="term" value="F:protein serine kinase activity"/>
    <property type="evidence" value="ECO:0007669"/>
    <property type="project" value="RHEA"/>
</dbReference>
<dbReference type="GO" id="GO:0004674">
    <property type="term" value="F:protein serine/threonine kinase activity"/>
    <property type="evidence" value="ECO:0000314"/>
    <property type="project" value="UniProtKB"/>
</dbReference>
<dbReference type="GO" id="GO:0003723">
    <property type="term" value="F:RNA binding"/>
    <property type="evidence" value="ECO:0000318"/>
    <property type="project" value="GO_Central"/>
</dbReference>
<dbReference type="GO" id="GO:0097190">
    <property type="term" value="P:apoptotic signaling pathway"/>
    <property type="evidence" value="ECO:0000304"/>
    <property type="project" value="ProtInc"/>
</dbReference>
<dbReference type="GO" id="GO:0000963">
    <property type="term" value="P:mitochondrial RNA processing"/>
    <property type="evidence" value="ECO:0000318"/>
    <property type="project" value="GO_Central"/>
</dbReference>
<dbReference type="GO" id="GO:0006468">
    <property type="term" value="P:protein phosphorylation"/>
    <property type="evidence" value="ECO:0000314"/>
    <property type="project" value="UniProtKB"/>
</dbReference>
<dbReference type="GO" id="GO:0044528">
    <property type="term" value="P:regulation of mitochondrial mRNA stability"/>
    <property type="evidence" value="ECO:0000318"/>
    <property type="project" value="GO_Central"/>
</dbReference>
<dbReference type="GO" id="GO:0043484">
    <property type="term" value="P:regulation of RNA splicing"/>
    <property type="evidence" value="ECO:0000314"/>
    <property type="project" value="UniProtKB"/>
</dbReference>
<dbReference type="InterPro" id="IPR013579">
    <property type="entry name" value="FAST_2"/>
</dbReference>
<dbReference type="InterPro" id="IPR050870">
    <property type="entry name" value="FAST_kinase"/>
</dbReference>
<dbReference type="InterPro" id="IPR010622">
    <property type="entry name" value="FAST_Leu-rich"/>
</dbReference>
<dbReference type="InterPro" id="IPR013584">
    <property type="entry name" value="RAP"/>
</dbReference>
<dbReference type="PANTHER" id="PTHR21228:SF4">
    <property type="entry name" value="FAS-ACTIVATED SERINE_THREONINE KINASE"/>
    <property type="match status" value="1"/>
</dbReference>
<dbReference type="PANTHER" id="PTHR21228">
    <property type="entry name" value="FAST LEU-RICH DOMAIN-CONTAINING"/>
    <property type="match status" value="1"/>
</dbReference>
<dbReference type="Pfam" id="PF06743">
    <property type="entry name" value="FAST_1"/>
    <property type="match status" value="1"/>
</dbReference>
<dbReference type="Pfam" id="PF08368">
    <property type="entry name" value="FAST_2"/>
    <property type="match status" value="1"/>
</dbReference>
<dbReference type="Pfam" id="PF08373">
    <property type="entry name" value="RAP"/>
    <property type="match status" value="1"/>
</dbReference>
<dbReference type="SMART" id="SM00952">
    <property type="entry name" value="RAP"/>
    <property type="match status" value="1"/>
</dbReference>
<dbReference type="PROSITE" id="PS51286">
    <property type="entry name" value="RAP"/>
    <property type="match status" value="1"/>
</dbReference>
<sequence length="549" mass="61104">MRRPRGEPGPRAPRPTEGATCAGPGESWSPSPNSMLRVLLSAQTSPARLSGLLLIPPVQPCCLGPSKWGDRPVGGGPSAGPVQGLQRLLEQAKSPGELLRWLGQNPSKVRAHHYSVALRRLGQLLGSRPRPPPVEQVTLQDLSQLIIRNCPSFDIHTIHVCLHLAVLLGFPSDGPLVCALEQERRLRLPPKPPPPLQPLLRGGQGLEAALSCPRFLRYPRQHLISSLAEARPEELTPHVMVLLAQHLARHRLREPQLLEAIAHFLVVQETQLSSKVVQKLVLPFGRLNYLPLEQQFMPCLERILAREAGVAPLATVNILMSLCQLRCLPFRALHFVFSPGFINYISGTPHALIVRRYLSLLDTAVELELPGYRGPRLPRRQQVPIFPQPLITDRARCKYSHKDIVAEGLRQLLGEEKYRQDLTVPPGYCTDFLLCASSSGAVLPVRTQDPFLPYPPRSCPQGQAASSATTRDPAQRVVLVLRERWHFCRDGRVLLGSRALRERHLGLMGYQLLPLPFEELESQRGLPQLKSYLRQKLQALGLRWGPEGG</sequence>
<gene>
    <name type="primary">FASTK</name>
</gene>
<organism>
    <name type="scientific">Homo sapiens</name>
    <name type="common">Human</name>
    <dbReference type="NCBI Taxonomy" id="9606"/>
    <lineage>
        <taxon>Eukaryota</taxon>
        <taxon>Metazoa</taxon>
        <taxon>Chordata</taxon>
        <taxon>Craniata</taxon>
        <taxon>Vertebrata</taxon>
        <taxon>Euteleostomi</taxon>
        <taxon>Mammalia</taxon>
        <taxon>Eutheria</taxon>
        <taxon>Euarchontoglires</taxon>
        <taxon>Primates</taxon>
        <taxon>Haplorrhini</taxon>
        <taxon>Catarrhini</taxon>
        <taxon>Hominidae</taxon>
        <taxon>Homo</taxon>
    </lineage>
</organism>
<accession>Q14296</accession>
<accession>A8K867</accession>
<accession>F8VTW9</accession>
<accession>Q59EM8</accession>
<accession>Q8IVA0</accession>
<evidence type="ECO:0000255" key="1">
    <source>
        <dbReference type="PROSITE-ProRule" id="PRU00619"/>
    </source>
</evidence>
<evidence type="ECO:0000256" key="2">
    <source>
        <dbReference type="SAM" id="MobiDB-lite"/>
    </source>
</evidence>
<evidence type="ECO:0000269" key="3">
    <source>
    </source>
</evidence>
<evidence type="ECO:0000269" key="4">
    <source>
    </source>
</evidence>
<evidence type="ECO:0000269" key="5">
    <source>
    </source>
</evidence>
<evidence type="ECO:0000269" key="6">
    <source>
    </source>
</evidence>
<evidence type="ECO:0000303" key="7">
    <source>
    </source>
</evidence>
<evidence type="ECO:0000303" key="8">
    <source>
    </source>
</evidence>
<evidence type="ECO:0000303" key="9">
    <source ref="3"/>
</evidence>
<evidence type="ECO:0000305" key="10"/>
<keyword id="KW-0024">Alternative initiation</keyword>
<keyword id="KW-0025">Alternative splicing</keyword>
<keyword id="KW-0053">Apoptosis</keyword>
<keyword id="KW-0067">ATP-binding</keyword>
<keyword id="KW-0418">Kinase</keyword>
<keyword id="KW-0496">Mitochondrion</keyword>
<keyword id="KW-0547">Nucleotide-binding</keyword>
<keyword id="KW-0597">Phosphoprotein</keyword>
<keyword id="KW-1267">Proteomics identification</keyword>
<keyword id="KW-1185">Reference proteome</keyword>
<keyword id="KW-0694">RNA-binding</keyword>
<keyword id="KW-0723">Serine/threonine-protein kinase</keyword>
<keyword id="KW-0808">Transferase</keyword>